<keyword id="KW-0002">3D-structure</keyword>
<keyword id="KW-1003">Cell membrane</keyword>
<keyword id="KW-0145">Chemotaxis</keyword>
<keyword id="KW-1015">Disulfide bond</keyword>
<keyword id="KW-0297">G-protein coupled receptor</keyword>
<keyword id="KW-0325">Glycoprotein</keyword>
<keyword id="KW-0472">Membrane</keyword>
<keyword id="KW-1267">Proteomics identification</keyword>
<keyword id="KW-0675">Receptor</keyword>
<keyword id="KW-1185">Reference proteome</keyword>
<keyword id="KW-0807">Transducer</keyword>
<keyword id="KW-0812">Transmembrane</keyword>
<keyword id="KW-1133">Transmembrane helix</keyword>
<organism>
    <name type="scientific">Homo sapiens</name>
    <name type="common">Human</name>
    <dbReference type="NCBI Taxonomy" id="9606"/>
    <lineage>
        <taxon>Eukaryota</taxon>
        <taxon>Metazoa</taxon>
        <taxon>Chordata</taxon>
        <taxon>Craniata</taxon>
        <taxon>Vertebrata</taxon>
        <taxon>Euteleostomi</taxon>
        <taxon>Mammalia</taxon>
        <taxon>Eutheria</taxon>
        <taxon>Euarchontoglires</taxon>
        <taxon>Primates</taxon>
        <taxon>Haplorrhini</taxon>
        <taxon>Catarrhini</taxon>
        <taxon>Hominidae</taxon>
        <taxon>Homo</taxon>
    </lineage>
</organism>
<reference key="1">
    <citation type="journal article" date="1991" name="Science">
        <title>Structure and functional expression of a human interleukin-8 receptor.</title>
        <authorList>
            <person name="Holmes W.E."/>
            <person name="Lee J."/>
            <person name="Kuang W.-J."/>
            <person name="Rice G.C."/>
            <person name="Wood W.I."/>
        </authorList>
    </citation>
    <scope>NUCLEOTIDE SEQUENCE [GENOMIC DNA / MRNA]</scope>
    <scope>VARIANT THR-276</scope>
    <scope>INTERACTION WITH IL8</scope>
</reference>
<reference key="2">
    <citation type="journal article" date="1993" name="Mol. Immunol.">
        <title>Molecular characterization of receptors for human interleukin-8, GRO/melanoma growth-stimulatory activity and neutrophil activating peptide-2.</title>
        <authorList>
            <person name="Cerretti D.P."/>
            <person name="Kozlosky C.J."/>
            <person name="Vanden Bos T."/>
            <person name="Nelson N."/>
            <person name="Gearing D.P."/>
            <person name="Beckmann M.P."/>
        </authorList>
    </citation>
    <scope>NUCLEOTIDE SEQUENCE [MRNA]</scope>
    <scope>CHARACTERIZATION</scope>
</reference>
<reference key="3">
    <citation type="journal article" date="1993" name="Genomics">
        <title>The high-affinity interleukin 8 receptor gene (IL8RA) maps to the 2q33-q36 region of the human genome: cloning of a pseudogene (IL8RBP) for the low-affinity receptor.</title>
        <authorList>
            <person name="Mollereau C."/>
            <person name="Passage E."/>
            <person name="Mattei M.-G."/>
            <person name="Vassart G."/>
            <person name="Parmentier M."/>
        </authorList>
    </citation>
    <scope>NUCLEOTIDE SEQUENCE [GENOMIC DNA]</scope>
</reference>
<reference key="4">
    <citation type="journal article" date="1994" name="J. Biol. Chem.">
        <title>Comparison of the genomic organization and promoter function for human interleukin-8 receptors A and B.</title>
        <authorList>
            <person name="Ahuja S.K."/>
            <person name="Shetty A."/>
            <person name="Tiffany H.L."/>
            <person name="Murphy P.M."/>
        </authorList>
    </citation>
    <scope>NUCLEOTIDE SEQUENCE [GENOMIC DNA]</scope>
    <source>
        <tissue>Placenta</tissue>
    </source>
</reference>
<reference key="5">
    <citation type="journal article" date="2005" name="J. Mol. Evol.">
        <title>Molecular evolution of CXCR1, a G protein-coupled receptor involved in signal transduction of neutrophils.</title>
        <authorList>
            <person name="Liu Y."/>
            <person name="Yang S."/>
            <person name="Lin A.A."/>
            <person name="Cavalli-Sforza L.L."/>
            <person name="Su B."/>
        </authorList>
    </citation>
    <scope>NUCLEOTIDE SEQUENCE [GENOMIC DNA]</scope>
    <scope>VARIANTS ARG-31; THR-276 AND CYS-335</scope>
</reference>
<reference key="6">
    <citation type="submission" date="2004-06" db="EMBL/GenBank/DDBJ databases">
        <title>Cloning of human full open reading frames in Gateway(TM) system entry vector (pDONR201).</title>
        <authorList>
            <person name="Halleck A."/>
            <person name="Ebert L."/>
            <person name="Mkoundinya M."/>
            <person name="Schick M."/>
            <person name="Eisenstein S."/>
            <person name="Neubert P."/>
            <person name="Kstrang K."/>
            <person name="Schatten R."/>
            <person name="Shen B."/>
            <person name="Henze S."/>
            <person name="Mar W."/>
            <person name="Korn B."/>
            <person name="Zuo D."/>
            <person name="Hu Y."/>
            <person name="LaBaer J."/>
        </authorList>
    </citation>
    <scope>NUCLEOTIDE SEQUENCE [LARGE SCALE MRNA]</scope>
</reference>
<reference key="7">
    <citation type="journal article" date="2004" name="Nat. Genet.">
        <title>Complete sequencing and characterization of 21,243 full-length human cDNAs.</title>
        <authorList>
            <person name="Ota T."/>
            <person name="Suzuki Y."/>
            <person name="Nishikawa T."/>
            <person name="Otsuki T."/>
            <person name="Sugiyama T."/>
            <person name="Irie R."/>
            <person name="Wakamatsu A."/>
            <person name="Hayashi K."/>
            <person name="Sato H."/>
            <person name="Nagai K."/>
            <person name="Kimura K."/>
            <person name="Makita H."/>
            <person name="Sekine M."/>
            <person name="Obayashi M."/>
            <person name="Nishi T."/>
            <person name="Shibahara T."/>
            <person name="Tanaka T."/>
            <person name="Ishii S."/>
            <person name="Yamamoto J."/>
            <person name="Saito K."/>
            <person name="Kawai Y."/>
            <person name="Isono Y."/>
            <person name="Nakamura Y."/>
            <person name="Nagahari K."/>
            <person name="Murakami K."/>
            <person name="Yasuda T."/>
            <person name="Iwayanagi T."/>
            <person name="Wagatsuma M."/>
            <person name="Shiratori A."/>
            <person name="Sudo H."/>
            <person name="Hosoiri T."/>
            <person name="Kaku Y."/>
            <person name="Kodaira H."/>
            <person name="Kondo H."/>
            <person name="Sugawara M."/>
            <person name="Takahashi M."/>
            <person name="Kanda K."/>
            <person name="Yokoi T."/>
            <person name="Furuya T."/>
            <person name="Kikkawa E."/>
            <person name="Omura Y."/>
            <person name="Abe K."/>
            <person name="Kamihara K."/>
            <person name="Katsuta N."/>
            <person name="Sato K."/>
            <person name="Tanikawa M."/>
            <person name="Yamazaki M."/>
            <person name="Ninomiya K."/>
            <person name="Ishibashi T."/>
            <person name="Yamashita H."/>
            <person name="Murakawa K."/>
            <person name="Fujimori K."/>
            <person name="Tanai H."/>
            <person name="Kimata M."/>
            <person name="Watanabe M."/>
            <person name="Hiraoka S."/>
            <person name="Chiba Y."/>
            <person name="Ishida S."/>
            <person name="Ono Y."/>
            <person name="Takiguchi S."/>
            <person name="Watanabe S."/>
            <person name="Yosida M."/>
            <person name="Hotuta T."/>
            <person name="Kusano J."/>
            <person name="Kanehori K."/>
            <person name="Takahashi-Fujii A."/>
            <person name="Hara H."/>
            <person name="Tanase T.-O."/>
            <person name="Nomura Y."/>
            <person name="Togiya S."/>
            <person name="Komai F."/>
            <person name="Hara R."/>
            <person name="Takeuchi K."/>
            <person name="Arita M."/>
            <person name="Imose N."/>
            <person name="Musashino K."/>
            <person name="Yuuki H."/>
            <person name="Oshima A."/>
            <person name="Sasaki N."/>
            <person name="Aotsuka S."/>
            <person name="Yoshikawa Y."/>
            <person name="Matsunawa H."/>
            <person name="Ichihara T."/>
            <person name="Shiohata N."/>
            <person name="Sano S."/>
            <person name="Moriya S."/>
            <person name="Momiyama H."/>
            <person name="Satoh N."/>
            <person name="Takami S."/>
            <person name="Terashima Y."/>
            <person name="Suzuki O."/>
            <person name="Nakagawa S."/>
            <person name="Senoh A."/>
            <person name="Mizoguchi H."/>
            <person name="Goto Y."/>
            <person name="Shimizu F."/>
            <person name="Wakebe H."/>
            <person name="Hishigaki H."/>
            <person name="Watanabe T."/>
            <person name="Sugiyama A."/>
            <person name="Takemoto M."/>
            <person name="Kawakami B."/>
            <person name="Yamazaki M."/>
            <person name="Watanabe K."/>
            <person name="Kumagai A."/>
            <person name="Itakura S."/>
            <person name="Fukuzumi Y."/>
            <person name="Fujimori Y."/>
            <person name="Komiyama M."/>
            <person name="Tashiro H."/>
            <person name="Tanigami A."/>
            <person name="Fujiwara T."/>
            <person name="Ono T."/>
            <person name="Yamada K."/>
            <person name="Fujii Y."/>
            <person name="Ozaki K."/>
            <person name="Hirao M."/>
            <person name="Ohmori Y."/>
            <person name="Kawabata A."/>
            <person name="Hikiji T."/>
            <person name="Kobatake N."/>
            <person name="Inagaki H."/>
            <person name="Ikema Y."/>
            <person name="Okamoto S."/>
            <person name="Okitani R."/>
            <person name="Kawakami T."/>
            <person name="Noguchi S."/>
            <person name="Itoh T."/>
            <person name="Shigeta K."/>
            <person name="Senba T."/>
            <person name="Matsumura K."/>
            <person name="Nakajima Y."/>
            <person name="Mizuno T."/>
            <person name="Morinaga M."/>
            <person name="Sasaki M."/>
            <person name="Togashi T."/>
            <person name="Oyama M."/>
            <person name="Hata H."/>
            <person name="Watanabe M."/>
            <person name="Komatsu T."/>
            <person name="Mizushima-Sugano J."/>
            <person name="Satoh T."/>
            <person name="Shirai Y."/>
            <person name="Takahashi Y."/>
            <person name="Nakagawa K."/>
            <person name="Okumura K."/>
            <person name="Nagase T."/>
            <person name="Nomura N."/>
            <person name="Kikuchi H."/>
            <person name="Masuho Y."/>
            <person name="Yamashita R."/>
            <person name="Nakai K."/>
            <person name="Yada T."/>
            <person name="Nakamura Y."/>
            <person name="Ohara O."/>
            <person name="Isogai T."/>
            <person name="Sugano S."/>
        </authorList>
    </citation>
    <scope>NUCLEOTIDE SEQUENCE [LARGE SCALE MRNA]</scope>
</reference>
<reference key="8">
    <citation type="submission" date="2004-06" db="EMBL/GenBank/DDBJ databases">
        <authorList>
            <consortium name="SeattleSNPs variation discovery resource"/>
        </authorList>
    </citation>
    <scope>NUCLEOTIDE SEQUENCE [GENOMIC DNA]</scope>
    <scope>VARIANTS ARG-31; THR-276; CYS-335 AND LEU-342</scope>
</reference>
<reference key="9">
    <citation type="journal article" date="2005" name="Nature">
        <title>Generation and annotation of the DNA sequences of human chromosomes 2 and 4.</title>
        <authorList>
            <person name="Hillier L.W."/>
            <person name="Graves T.A."/>
            <person name="Fulton R.S."/>
            <person name="Fulton L.A."/>
            <person name="Pepin K.H."/>
            <person name="Minx P."/>
            <person name="Wagner-McPherson C."/>
            <person name="Layman D."/>
            <person name="Wylie K."/>
            <person name="Sekhon M."/>
            <person name="Becker M.C."/>
            <person name="Fewell G.A."/>
            <person name="Delehaunty K.D."/>
            <person name="Miner T.L."/>
            <person name="Nash W.E."/>
            <person name="Kremitzki C."/>
            <person name="Oddy L."/>
            <person name="Du H."/>
            <person name="Sun H."/>
            <person name="Bradshaw-Cordum H."/>
            <person name="Ali J."/>
            <person name="Carter J."/>
            <person name="Cordes M."/>
            <person name="Harris A."/>
            <person name="Isak A."/>
            <person name="van Brunt A."/>
            <person name="Nguyen C."/>
            <person name="Du F."/>
            <person name="Courtney L."/>
            <person name="Kalicki J."/>
            <person name="Ozersky P."/>
            <person name="Abbott S."/>
            <person name="Armstrong J."/>
            <person name="Belter E.A."/>
            <person name="Caruso L."/>
            <person name="Cedroni M."/>
            <person name="Cotton M."/>
            <person name="Davidson T."/>
            <person name="Desai A."/>
            <person name="Elliott G."/>
            <person name="Erb T."/>
            <person name="Fronick C."/>
            <person name="Gaige T."/>
            <person name="Haakenson W."/>
            <person name="Haglund K."/>
            <person name="Holmes A."/>
            <person name="Harkins R."/>
            <person name="Kim K."/>
            <person name="Kruchowski S.S."/>
            <person name="Strong C.M."/>
            <person name="Grewal N."/>
            <person name="Goyea E."/>
            <person name="Hou S."/>
            <person name="Levy A."/>
            <person name="Martinka S."/>
            <person name="Mead K."/>
            <person name="McLellan M.D."/>
            <person name="Meyer R."/>
            <person name="Randall-Maher J."/>
            <person name="Tomlinson C."/>
            <person name="Dauphin-Kohlberg S."/>
            <person name="Kozlowicz-Reilly A."/>
            <person name="Shah N."/>
            <person name="Swearengen-Shahid S."/>
            <person name="Snider J."/>
            <person name="Strong J.T."/>
            <person name="Thompson J."/>
            <person name="Yoakum M."/>
            <person name="Leonard S."/>
            <person name="Pearman C."/>
            <person name="Trani L."/>
            <person name="Radionenko M."/>
            <person name="Waligorski J.E."/>
            <person name="Wang C."/>
            <person name="Rock S.M."/>
            <person name="Tin-Wollam A.-M."/>
            <person name="Maupin R."/>
            <person name="Latreille P."/>
            <person name="Wendl M.C."/>
            <person name="Yang S.-P."/>
            <person name="Pohl C."/>
            <person name="Wallis J.W."/>
            <person name="Spieth J."/>
            <person name="Bieri T.A."/>
            <person name="Berkowicz N."/>
            <person name="Nelson J.O."/>
            <person name="Osborne J."/>
            <person name="Ding L."/>
            <person name="Meyer R."/>
            <person name="Sabo A."/>
            <person name="Shotland Y."/>
            <person name="Sinha P."/>
            <person name="Wohldmann P.E."/>
            <person name="Cook L.L."/>
            <person name="Hickenbotham M.T."/>
            <person name="Eldred J."/>
            <person name="Williams D."/>
            <person name="Jones T.A."/>
            <person name="She X."/>
            <person name="Ciccarelli F.D."/>
            <person name="Izaurralde E."/>
            <person name="Taylor J."/>
            <person name="Schmutz J."/>
            <person name="Myers R.M."/>
            <person name="Cox D.R."/>
            <person name="Huang X."/>
            <person name="McPherson J.D."/>
            <person name="Mardis E.R."/>
            <person name="Clifton S.W."/>
            <person name="Warren W.C."/>
            <person name="Chinwalla A.T."/>
            <person name="Eddy S.R."/>
            <person name="Marra M.A."/>
            <person name="Ovcharenko I."/>
            <person name="Furey T.S."/>
            <person name="Miller W."/>
            <person name="Eichler E.E."/>
            <person name="Bork P."/>
            <person name="Suyama M."/>
            <person name="Torrents D."/>
            <person name="Waterston R.H."/>
            <person name="Wilson R.K."/>
        </authorList>
    </citation>
    <scope>NUCLEOTIDE SEQUENCE [LARGE SCALE GENOMIC DNA]</scope>
</reference>
<reference key="10">
    <citation type="submission" date="2005-07" db="EMBL/GenBank/DDBJ databases">
        <authorList>
            <person name="Mural R.J."/>
            <person name="Istrail S."/>
            <person name="Sutton G.G."/>
            <person name="Florea L."/>
            <person name="Halpern A.L."/>
            <person name="Mobarry C.M."/>
            <person name="Lippert R."/>
            <person name="Walenz B."/>
            <person name="Shatkay H."/>
            <person name="Dew I."/>
            <person name="Miller J.R."/>
            <person name="Flanigan M.J."/>
            <person name="Edwards N.J."/>
            <person name="Bolanos R."/>
            <person name="Fasulo D."/>
            <person name="Halldorsson B.V."/>
            <person name="Hannenhalli S."/>
            <person name="Turner R."/>
            <person name="Yooseph S."/>
            <person name="Lu F."/>
            <person name="Nusskern D.R."/>
            <person name="Shue B.C."/>
            <person name="Zheng X.H."/>
            <person name="Zhong F."/>
            <person name="Delcher A.L."/>
            <person name="Huson D.H."/>
            <person name="Kravitz S.A."/>
            <person name="Mouchard L."/>
            <person name="Reinert K."/>
            <person name="Remington K.A."/>
            <person name="Clark A.G."/>
            <person name="Waterman M.S."/>
            <person name="Eichler E.E."/>
            <person name="Adams M.D."/>
            <person name="Hunkapiller M.W."/>
            <person name="Myers E.W."/>
            <person name="Venter J.C."/>
        </authorList>
    </citation>
    <scope>NUCLEOTIDE SEQUENCE [LARGE SCALE GENOMIC DNA]</scope>
</reference>
<reference key="11">
    <citation type="journal article" date="2004" name="Genome Res.">
        <title>The status, quality, and expansion of the NIH full-length cDNA project: the Mammalian Gene Collection (MGC).</title>
        <authorList>
            <consortium name="The MGC Project Team"/>
        </authorList>
    </citation>
    <scope>NUCLEOTIDE SEQUENCE [LARGE SCALE MRNA]</scope>
    <scope>VARIANTS ARG-31 AND CYS-335</scope>
    <source>
        <tissue>Blood</tissue>
    </source>
</reference>
<reference key="12">
    <citation type="journal article" date="2000" name="Genes Immun.">
        <title>Single nucleotide polymorphisms in the coding regions of human CXC-chemokine receptors CXCR1, CXCR2 and CXCR3.</title>
        <authorList>
            <person name="Kato H."/>
            <person name="Tsuchiya N."/>
            <person name="Tokunaga K."/>
        </authorList>
    </citation>
    <scope>NUCLEOTIDE SEQUENCE [GENOMIC DNA] OF 223-350</scope>
    <scope>VARIANTS THR-276; THR-306 AND CYS-335</scope>
</reference>
<reference key="13">
    <citation type="journal article" date="1996" name="J. Biol. Chem.">
        <title>Physical association of Gi2alpha with interleukin-8 receptors.</title>
        <authorList>
            <person name="Damaj B.B."/>
            <person name="McColl S.R."/>
            <person name="Mahana W."/>
            <person name="Crouch M.F."/>
            <person name="Naccache P.H."/>
        </authorList>
    </citation>
    <scope>FUNCTION</scope>
    <scope>INTERACTION WITH GNAI2</scope>
</reference>
<reference key="14">
    <citation type="journal article" date="1992" name="J. Biol. Chem.">
        <title>Characterization of two high affinity human interleukin-8 receptors.</title>
        <authorList>
            <person name="Lee J."/>
            <person name="Horuk R."/>
            <person name="Rice G.C."/>
            <person name="Bennett G.L."/>
            <person name="Camerato T."/>
            <person name="Wood W.I."/>
        </authorList>
    </citation>
    <scope>CHARACTERIZATION</scope>
</reference>
<reference key="15">
    <citation type="journal article" date="1999" name="Structure">
        <title>Structure of a CXC chemokine-receptor fragment in complex with interleukin-8.</title>
        <authorList>
            <person name="Skelton N.J."/>
            <person name="Quan C."/>
            <person name="Reilly D."/>
            <person name="Lowman H."/>
        </authorList>
    </citation>
    <scope>STRUCTURE BY NMR OF 9-29 IN COMPLEX WITH IL-8</scope>
</reference>
<name>CXCR1_HUMAN</name>
<evidence type="ECO:0000255" key="1"/>
<evidence type="ECO:0000255" key="2">
    <source>
        <dbReference type="PROSITE-ProRule" id="PRU00521"/>
    </source>
</evidence>
<evidence type="ECO:0000269" key="3">
    <source>
    </source>
</evidence>
<evidence type="ECO:0000269" key="4">
    <source>
    </source>
</evidence>
<evidence type="ECO:0000269" key="5">
    <source>
    </source>
</evidence>
<evidence type="ECO:0000269" key="6">
    <source>
    </source>
</evidence>
<evidence type="ECO:0000269" key="7">
    <source>
    </source>
</evidence>
<evidence type="ECO:0000269" key="8">
    <source ref="8"/>
</evidence>
<evidence type="ECO:0000305" key="9"/>
<evidence type="ECO:0007829" key="10">
    <source>
        <dbReference type="PDB" id="2LNL"/>
    </source>
</evidence>
<evidence type="ECO:0007829" key="11">
    <source>
        <dbReference type="PDB" id="8IC0"/>
    </source>
</evidence>
<protein>
    <recommendedName>
        <fullName>C-X-C chemokine receptor type 1</fullName>
        <shortName>CXC-R1</shortName>
        <shortName>CXCR-1</shortName>
    </recommendedName>
    <alternativeName>
        <fullName>CDw128a</fullName>
    </alternativeName>
    <alternativeName>
        <fullName>High affinity interleukin-8 receptor A</fullName>
        <shortName>IL-8R A</shortName>
    </alternativeName>
    <alternativeName>
        <fullName>IL-8 receptor type 1</fullName>
    </alternativeName>
    <cdAntigenName>CD181</cdAntigenName>
</protein>
<gene>
    <name type="primary">CXCR1</name>
    <name type="synonym">CMKAR1</name>
    <name type="synonym">IL8RA</name>
</gene>
<dbReference type="EMBL" id="L19591">
    <property type="protein sequence ID" value="AAB59436.1"/>
    <property type="molecule type" value="mRNA"/>
</dbReference>
<dbReference type="EMBL" id="L19592">
    <property type="protein sequence ID" value="AAA59160.1"/>
    <property type="molecule type" value="Genomic_DNA"/>
</dbReference>
<dbReference type="EMBL" id="M68932">
    <property type="protein sequence ID" value="AAA59159.1"/>
    <property type="molecule type" value="mRNA"/>
</dbReference>
<dbReference type="EMBL" id="X65858">
    <property type="protein sequence ID" value="CAA46688.1"/>
    <property type="molecule type" value="Genomic_DNA"/>
</dbReference>
<dbReference type="EMBL" id="U11870">
    <property type="protein sequence ID" value="AAA64378.1"/>
    <property type="molecule type" value="Genomic_DNA"/>
</dbReference>
<dbReference type="EMBL" id="AY916762">
    <property type="protein sequence ID" value="AAY21512.1"/>
    <property type="molecule type" value="Genomic_DNA"/>
</dbReference>
<dbReference type="EMBL" id="AY916763">
    <property type="protein sequence ID" value="AAY21513.1"/>
    <property type="molecule type" value="Genomic_DNA"/>
</dbReference>
<dbReference type="EMBL" id="AY916764">
    <property type="protein sequence ID" value="AAY21514.1"/>
    <property type="molecule type" value="Genomic_DNA"/>
</dbReference>
<dbReference type="EMBL" id="AY916765">
    <property type="protein sequence ID" value="AAY21515.1"/>
    <property type="molecule type" value="Genomic_DNA"/>
</dbReference>
<dbReference type="EMBL" id="AY916766">
    <property type="protein sequence ID" value="AAY21516.1"/>
    <property type="molecule type" value="Genomic_DNA"/>
</dbReference>
<dbReference type="EMBL" id="AY916769">
    <property type="protein sequence ID" value="AAY21519.1"/>
    <property type="molecule type" value="Genomic_DNA"/>
</dbReference>
<dbReference type="EMBL" id="AY916772">
    <property type="protein sequence ID" value="AAY21522.1"/>
    <property type="molecule type" value="Genomic_DNA"/>
</dbReference>
<dbReference type="EMBL" id="AY916773">
    <property type="protein sequence ID" value="AAY21523.1"/>
    <property type="molecule type" value="Genomic_DNA"/>
</dbReference>
<dbReference type="EMBL" id="CR541994">
    <property type="protein sequence ID" value="CAG46791.1"/>
    <property type="molecule type" value="mRNA"/>
</dbReference>
<dbReference type="EMBL" id="CR542029">
    <property type="protein sequence ID" value="CAG46826.1"/>
    <property type="molecule type" value="mRNA"/>
</dbReference>
<dbReference type="EMBL" id="AK312668">
    <property type="protein sequence ID" value="BAG35550.1"/>
    <property type="molecule type" value="mRNA"/>
</dbReference>
<dbReference type="EMBL" id="AY651785">
    <property type="protein sequence ID" value="AAT46689.1"/>
    <property type="molecule type" value="Genomic_DNA"/>
</dbReference>
<dbReference type="EMBL" id="AC097483">
    <property type="protein sequence ID" value="AAX93212.1"/>
    <property type="molecule type" value="Genomic_DNA"/>
</dbReference>
<dbReference type="EMBL" id="CH471063">
    <property type="protein sequence ID" value="EAW70590.1"/>
    <property type="molecule type" value="Genomic_DNA"/>
</dbReference>
<dbReference type="EMBL" id="BC028221">
    <property type="protein sequence ID" value="AAH28221.1"/>
    <property type="molecule type" value="mRNA"/>
</dbReference>
<dbReference type="EMBL" id="BC072397">
    <property type="protein sequence ID" value="AAH72397.1"/>
    <property type="molecule type" value="mRNA"/>
</dbReference>
<dbReference type="EMBL" id="AB032728">
    <property type="protein sequence ID" value="BAA92290.1"/>
    <property type="molecule type" value="Genomic_DNA"/>
</dbReference>
<dbReference type="EMBL" id="AB032729">
    <property type="protein sequence ID" value="BAA92291.1"/>
    <property type="molecule type" value="Genomic_DNA"/>
</dbReference>
<dbReference type="EMBL" id="AB032730">
    <property type="protein sequence ID" value="BAA92292.1"/>
    <property type="molecule type" value="Genomic_DNA"/>
</dbReference>
<dbReference type="EMBL" id="AB032731">
    <property type="protein sequence ID" value="BAA92293.1"/>
    <property type="molecule type" value="Genomic_DNA"/>
</dbReference>
<dbReference type="EMBL" id="AB032732">
    <property type="protein sequence ID" value="BAA92294.1"/>
    <property type="molecule type" value="Genomic_DNA"/>
</dbReference>
<dbReference type="CCDS" id="CCDS2409.1"/>
<dbReference type="PIR" id="I37449">
    <property type="entry name" value="A39445"/>
</dbReference>
<dbReference type="RefSeq" id="NP_000625.1">
    <property type="nucleotide sequence ID" value="NM_000634.3"/>
</dbReference>
<dbReference type="PDB" id="1ILP">
    <property type="method" value="NMR"/>
    <property type="chains" value="C=9-29"/>
</dbReference>
<dbReference type="PDB" id="1ILQ">
    <property type="method" value="NMR"/>
    <property type="chains" value="C=9-29"/>
</dbReference>
<dbReference type="PDB" id="2LNL">
    <property type="method" value="NMR"/>
    <property type="chains" value="A=20-328"/>
</dbReference>
<dbReference type="PDB" id="6XMN">
    <property type="method" value="NMR"/>
    <property type="chains" value="B=1-29"/>
</dbReference>
<dbReference type="PDB" id="8IC0">
    <property type="method" value="EM"/>
    <property type="resolution" value="3.41 A"/>
    <property type="chains" value="A=1-350"/>
</dbReference>
<dbReference type="PDBsum" id="1ILP"/>
<dbReference type="PDBsum" id="1ILQ"/>
<dbReference type="PDBsum" id="2LNL"/>
<dbReference type="PDBsum" id="6XMN"/>
<dbReference type="PDBsum" id="8IC0"/>
<dbReference type="BMRB" id="P25024"/>
<dbReference type="EMDB" id="EMD-35351"/>
<dbReference type="SMR" id="P25024"/>
<dbReference type="BioGRID" id="109791">
    <property type="interactions" value="9"/>
</dbReference>
<dbReference type="ComplexPortal" id="CPX-9601">
    <property type="entry name" value="CXCL8-CXCR1 receptor-ligand complex"/>
</dbReference>
<dbReference type="CORUM" id="P25024"/>
<dbReference type="DIP" id="DIP-3779N"/>
<dbReference type="FunCoup" id="P25024">
    <property type="interactions" value="1050"/>
</dbReference>
<dbReference type="IntAct" id="P25024">
    <property type="interactions" value="8"/>
</dbReference>
<dbReference type="STRING" id="9606.ENSP00000295683"/>
<dbReference type="BindingDB" id="P25024"/>
<dbReference type="ChEMBL" id="CHEMBL4029"/>
<dbReference type="DrugBank" id="DB01050">
    <property type="generic name" value="Ibuprofen"/>
</dbReference>
<dbReference type="DrugBank" id="DB08951">
    <property type="generic name" value="Indoprofen"/>
</dbReference>
<dbReference type="DrugBank" id="DB01009">
    <property type="generic name" value="Ketoprofen"/>
</dbReference>
<dbReference type="DrugBank" id="DB12614">
    <property type="generic name" value="Reparixin"/>
</dbReference>
<dbReference type="DrugBank" id="DB19210">
    <property type="generic name" value="SX-682"/>
</dbReference>
<dbReference type="DrugCentral" id="P25024"/>
<dbReference type="GuidetoPHARMACOLOGY" id="68"/>
<dbReference type="GlyCosmos" id="P25024">
    <property type="glycosylation" value="2 sites, No reported glycans"/>
</dbReference>
<dbReference type="GlyGen" id="P25024">
    <property type="glycosylation" value="5 sites, 1 O-linked glycan (3 sites)"/>
</dbReference>
<dbReference type="iPTMnet" id="P25024"/>
<dbReference type="PhosphoSitePlus" id="P25024"/>
<dbReference type="BioMuta" id="CXCR1"/>
<dbReference type="DMDM" id="108936015"/>
<dbReference type="MassIVE" id="P25024"/>
<dbReference type="PaxDb" id="9606-ENSP00000295683"/>
<dbReference type="PeptideAtlas" id="P25024"/>
<dbReference type="ProteomicsDB" id="54245"/>
<dbReference type="Antibodypedia" id="4267">
    <property type="antibodies" value="652 antibodies from 45 providers"/>
</dbReference>
<dbReference type="DNASU" id="3577"/>
<dbReference type="Ensembl" id="ENST00000295683.3">
    <property type="protein sequence ID" value="ENSP00000295683.2"/>
    <property type="gene ID" value="ENSG00000163464.8"/>
</dbReference>
<dbReference type="GeneID" id="3577"/>
<dbReference type="KEGG" id="hsa:3577"/>
<dbReference type="MANE-Select" id="ENST00000295683.3">
    <property type="protein sequence ID" value="ENSP00000295683.2"/>
    <property type="RefSeq nucleotide sequence ID" value="NM_000634.3"/>
    <property type="RefSeq protein sequence ID" value="NP_000625.1"/>
</dbReference>
<dbReference type="UCSC" id="uc002vhc.4">
    <property type="organism name" value="human"/>
</dbReference>
<dbReference type="AGR" id="HGNC:6026"/>
<dbReference type="CTD" id="3577"/>
<dbReference type="DisGeNET" id="3577"/>
<dbReference type="GeneCards" id="CXCR1"/>
<dbReference type="HGNC" id="HGNC:6026">
    <property type="gene designation" value="CXCR1"/>
</dbReference>
<dbReference type="HPA" id="ENSG00000163464">
    <property type="expression patterns" value="Tissue enhanced (adipose tissue, lymphoid tissue)"/>
</dbReference>
<dbReference type="MalaCards" id="CXCR1"/>
<dbReference type="MIM" id="146929">
    <property type="type" value="gene"/>
</dbReference>
<dbReference type="neXtProt" id="NX_P25024"/>
<dbReference type="OpenTargets" id="ENSG00000163464"/>
<dbReference type="PharmGKB" id="PA29842"/>
<dbReference type="VEuPathDB" id="HostDB:ENSG00000163464"/>
<dbReference type="eggNOG" id="KOG3656">
    <property type="taxonomic scope" value="Eukaryota"/>
</dbReference>
<dbReference type="GeneTree" id="ENSGT01050000244848"/>
<dbReference type="HOGENOM" id="CLU_009579_8_3_1"/>
<dbReference type="InParanoid" id="P25024"/>
<dbReference type="OMA" id="SPVCYEV"/>
<dbReference type="OrthoDB" id="9946013at2759"/>
<dbReference type="PAN-GO" id="P25024">
    <property type="GO annotations" value="7 GO annotations based on evolutionary models"/>
</dbReference>
<dbReference type="PhylomeDB" id="P25024"/>
<dbReference type="TreeFam" id="TF330966"/>
<dbReference type="PathwayCommons" id="P25024"/>
<dbReference type="Reactome" id="R-HSA-380108">
    <property type="pathway name" value="Chemokine receptors bind chemokines"/>
</dbReference>
<dbReference type="Reactome" id="R-HSA-418594">
    <property type="pathway name" value="G alpha (i) signalling events"/>
</dbReference>
<dbReference type="Reactome" id="R-HSA-6798695">
    <property type="pathway name" value="Neutrophil degranulation"/>
</dbReference>
<dbReference type="SignaLink" id="P25024"/>
<dbReference type="SIGNOR" id="P25024"/>
<dbReference type="BioGRID-ORCS" id="3577">
    <property type="hits" value="8 hits in 1149 CRISPR screens"/>
</dbReference>
<dbReference type="ChiTaRS" id="CXCR1">
    <property type="organism name" value="human"/>
</dbReference>
<dbReference type="EvolutionaryTrace" id="P25024"/>
<dbReference type="GeneWiki" id="Interleukin_8_receptor,_alpha"/>
<dbReference type="GenomeRNAi" id="3577"/>
<dbReference type="Pharos" id="P25024">
    <property type="development level" value="Tchem"/>
</dbReference>
<dbReference type="PRO" id="PR:P25024"/>
<dbReference type="Proteomes" id="UP000005640">
    <property type="component" value="Chromosome 2"/>
</dbReference>
<dbReference type="RNAct" id="P25024">
    <property type="molecule type" value="protein"/>
</dbReference>
<dbReference type="Bgee" id="ENSG00000163464">
    <property type="expression patterns" value="Expressed in blood and 112 other cell types or tissues"/>
</dbReference>
<dbReference type="GO" id="GO:0009897">
    <property type="term" value="C:external side of plasma membrane"/>
    <property type="evidence" value="ECO:0000318"/>
    <property type="project" value="GO_Central"/>
</dbReference>
<dbReference type="GO" id="GO:0005886">
    <property type="term" value="C:plasma membrane"/>
    <property type="evidence" value="ECO:0000304"/>
    <property type="project" value="Reactome"/>
</dbReference>
<dbReference type="GO" id="GO:0030667">
    <property type="term" value="C:secretory granule membrane"/>
    <property type="evidence" value="ECO:0000304"/>
    <property type="project" value="Reactome"/>
</dbReference>
<dbReference type="GO" id="GO:0019957">
    <property type="term" value="F:C-C chemokine binding"/>
    <property type="evidence" value="ECO:0000318"/>
    <property type="project" value="GO_Central"/>
</dbReference>
<dbReference type="GO" id="GO:0016493">
    <property type="term" value="F:C-C chemokine receptor activity"/>
    <property type="evidence" value="ECO:0000318"/>
    <property type="project" value="GO_Central"/>
</dbReference>
<dbReference type="GO" id="GO:0004950">
    <property type="term" value="F:chemokine receptor activity"/>
    <property type="evidence" value="ECO:0000304"/>
    <property type="project" value="ProtInc"/>
</dbReference>
<dbReference type="GO" id="GO:0004930">
    <property type="term" value="F:G protein-coupled receptor activity"/>
    <property type="evidence" value="ECO:0000304"/>
    <property type="project" value="ProtInc"/>
</dbReference>
<dbReference type="GO" id="GO:0019959">
    <property type="term" value="F:interleukin-8 binding"/>
    <property type="evidence" value="ECO:0000353"/>
    <property type="project" value="UniProtKB"/>
</dbReference>
<dbReference type="GO" id="GO:0004918">
    <property type="term" value="F:interleukin-8 receptor activity"/>
    <property type="evidence" value="ECO:0000314"/>
    <property type="project" value="UniProtKB"/>
</dbReference>
<dbReference type="GO" id="GO:0019722">
    <property type="term" value="P:calcium-mediated signaling"/>
    <property type="evidence" value="ECO:0000318"/>
    <property type="project" value="GO_Central"/>
</dbReference>
<dbReference type="GO" id="GO:0007166">
    <property type="term" value="P:cell surface receptor signaling pathway"/>
    <property type="evidence" value="ECO:0000314"/>
    <property type="project" value="UniProtKB"/>
</dbReference>
<dbReference type="GO" id="GO:0002407">
    <property type="term" value="P:dendritic cell chemotaxis"/>
    <property type="evidence" value="ECO:0000304"/>
    <property type="project" value="BHF-UCL"/>
</dbReference>
<dbReference type="GO" id="GO:0007186">
    <property type="term" value="P:G protein-coupled receptor signaling pathway"/>
    <property type="evidence" value="ECO:0000304"/>
    <property type="project" value="ProtInc"/>
</dbReference>
<dbReference type="GO" id="GO:0006955">
    <property type="term" value="P:immune response"/>
    <property type="evidence" value="ECO:0000318"/>
    <property type="project" value="GO_Central"/>
</dbReference>
<dbReference type="GO" id="GO:0030593">
    <property type="term" value="P:neutrophil chemotaxis"/>
    <property type="evidence" value="ECO:0000318"/>
    <property type="project" value="GO_Central"/>
</dbReference>
<dbReference type="GO" id="GO:0007204">
    <property type="term" value="P:positive regulation of cytosolic calcium ion concentration"/>
    <property type="evidence" value="ECO:0000318"/>
    <property type="project" value="GO_Central"/>
</dbReference>
<dbReference type="GO" id="GO:0031623">
    <property type="term" value="P:receptor internalization"/>
    <property type="evidence" value="ECO:0000314"/>
    <property type="project" value="UniProtKB"/>
</dbReference>
<dbReference type="CDD" id="cd15178">
    <property type="entry name" value="7tmA_CXCR1_2"/>
    <property type="match status" value="1"/>
</dbReference>
<dbReference type="FunFam" id="1.20.1070.10:FF:000157">
    <property type="entry name" value="C-X-C chemokine receptor type 2"/>
    <property type="match status" value="1"/>
</dbReference>
<dbReference type="Gene3D" id="1.20.1070.10">
    <property type="entry name" value="Rhodopsin 7-helix transmembrane proteins"/>
    <property type="match status" value="1"/>
</dbReference>
<dbReference type="InterPro" id="IPR050119">
    <property type="entry name" value="CCR1-9-like"/>
</dbReference>
<dbReference type="InterPro" id="IPR001355">
    <property type="entry name" value="Chemokine_CXCR1"/>
</dbReference>
<dbReference type="InterPro" id="IPR000174">
    <property type="entry name" value="Chemokine_CXCR_1/2"/>
</dbReference>
<dbReference type="InterPro" id="IPR000276">
    <property type="entry name" value="GPCR_Rhodpsn"/>
</dbReference>
<dbReference type="InterPro" id="IPR017452">
    <property type="entry name" value="GPCR_Rhodpsn_7TM"/>
</dbReference>
<dbReference type="PANTHER" id="PTHR10489:SF916">
    <property type="entry name" value="C-X-C CHEMOKINE RECEPTOR TYPE 1"/>
    <property type="match status" value="1"/>
</dbReference>
<dbReference type="PANTHER" id="PTHR10489">
    <property type="entry name" value="CELL ADHESION MOLECULE"/>
    <property type="match status" value="1"/>
</dbReference>
<dbReference type="Pfam" id="PF00001">
    <property type="entry name" value="7tm_1"/>
    <property type="match status" value="1"/>
</dbReference>
<dbReference type="PRINTS" id="PR00237">
    <property type="entry name" value="GPCRRHODOPSN"/>
</dbReference>
<dbReference type="PRINTS" id="PR00427">
    <property type="entry name" value="INTRLEUKIN8R"/>
</dbReference>
<dbReference type="PRINTS" id="PR00572">
    <property type="entry name" value="INTRLEUKN8AR"/>
</dbReference>
<dbReference type="SUPFAM" id="SSF81321">
    <property type="entry name" value="Family A G protein-coupled receptor-like"/>
    <property type="match status" value="1"/>
</dbReference>
<dbReference type="PROSITE" id="PS00237">
    <property type="entry name" value="G_PROTEIN_RECEP_F1_1"/>
    <property type="match status" value="1"/>
</dbReference>
<dbReference type="PROSITE" id="PS50262">
    <property type="entry name" value="G_PROTEIN_RECEP_F1_2"/>
    <property type="match status" value="1"/>
</dbReference>
<proteinExistence type="evidence at protein level"/>
<comment type="function">
    <text evidence="6 7">Receptor to interleukin-8, which is a powerful neutrophils chemotactic factor (PubMed:1840701). Binding of IL-8 to the receptor causes activation of neutrophils. This response is mediated via a G-protein that activates a phosphatidylinositol-calcium second messenger system (PubMed:8662698).</text>
</comment>
<comment type="subunit">
    <text evidence="6 7">Interacts with IL8 (PubMed:1840701). Interacts with GNAI2 (PubMed:8662698).</text>
</comment>
<comment type="interaction">
    <interactant intactId="EBI-3905522">
        <id>P25024</id>
    </interactant>
    <interactant intactId="EBI-4319704">
        <id>Q9NY35</id>
        <label>CLDND1</label>
    </interactant>
    <organismsDiffer>false</organismsDiffer>
    <experiments>3</experiments>
</comment>
<comment type="interaction">
    <interactant intactId="EBI-3905522">
        <id>P25024</id>
    </interactant>
    <interactant intactId="EBI-743099">
        <id>Q969F0</id>
        <label>FATE1</label>
    </interactant>
    <organismsDiffer>false</organismsDiffer>
    <experiments>3</experiments>
</comment>
<comment type="interaction">
    <interactant intactId="EBI-3905522">
        <id>P25024</id>
    </interactant>
    <interactant intactId="EBI-720480">
        <id>P24593</id>
        <label>IGFBP5</label>
    </interactant>
    <organismsDiffer>false</organismsDiffer>
    <experiments>3</experiments>
</comment>
<comment type="interaction">
    <interactant intactId="EBI-3905522">
        <id>P25024</id>
    </interactant>
    <interactant intactId="EBI-11988865">
        <id>A5PKU2</id>
        <label>TUSC5</label>
    </interactant>
    <organismsDiffer>false</organismsDiffer>
    <experiments>3</experiments>
</comment>
<comment type="subcellular location">
    <subcellularLocation>
        <location>Cell membrane</location>
        <topology>Multi-pass membrane protein</topology>
    </subcellularLocation>
</comment>
<comment type="similarity">
    <text evidence="2">Belongs to the G-protein coupled receptor 1 family.</text>
</comment>
<comment type="online information" name="Wikipedia">
    <link uri="https://en.wikipedia.org/wiki/CXC_chemokine_receptors"/>
    <text>CXC chemokine receptors entry</text>
</comment>
<accession>P25024</accession>
<accession>B2R6Q3</accession>
<accession>Q2YEF8</accession>
<accession>Q2YEG4</accession>
<accession>Q2YEG5</accession>
<accession>Q2YEG7</accession>
<accession>Q2YEG8</accession>
<accession>Q53R18</accession>
<accession>Q6IN95</accession>
<accession>Q8N6T6</accession>
<accession>Q9P2T8</accession>
<accession>Q9P2T9</accession>
<accession>Q9P2U0</accession>
<accession>Q9P2U1</accession>
<accession>Q9P2U2</accession>
<feature type="chain" id="PRO_0000069330" description="C-X-C chemokine receptor type 1">
    <location>
        <begin position="1"/>
        <end position="350"/>
    </location>
</feature>
<feature type="topological domain" description="Extracellular" evidence="1">
    <location>
        <begin position="1"/>
        <end position="39"/>
    </location>
</feature>
<feature type="transmembrane region" description="Helical; Name=1" evidence="1">
    <location>
        <begin position="40"/>
        <end position="66"/>
    </location>
</feature>
<feature type="topological domain" description="Cytoplasmic" evidence="1">
    <location>
        <begin position="67"/>
        <end position="75"/>
    </location>
</feature>
<feature type="transmembrane region" description="Helical; Name=2" evidence="1">
    <location>
        <begin position="76"/>
        <end position="96"/>
    </location>
</feature>
<feature type="topological domain" description="Extracellular" evidence="1">
    <location>
        <begin position="97"/>
        <end position="111"/>
    </location>
</feature>
<feature type="transmembrane region" description="Helical; Name=3" evidence="1">
    <location>
        <begin position="112"/>
        <end position="133"/>
    </location>
</feature>
<feature type="topological domain" description="Cytoplasmic" evidence="1">
    <location>
        <begin position="134"/>
        <end position="154"/>
    </location>
</feature>
<feature type="transmembrane region" description="Helical; Name=4" evidence="1">
    <location>
        <begin position="155"/>
        <end position="174"/>
    </location>
</feature>
<feature type="topological domain" description="Extracellular" evidence="1">
    <location>
        <begin position="175"/>
        <end position="199"/>
    </location>
</feature>
<feature type="transmembrane region" description="Helical; Name=5" evidence="1">
    <location>
        <begin position="200"/>
        <end position="220"/>
    </location>
</feature>
<feature type="topological domain" description="Cytoplasmic" evidence="1">
    <location>
        <begin position="221"/>
        <end position="242"/>
    </location>
</feature>
<feature type="transmembrane region" description="Helical; Name=6" evidence="1">
    <location>
        <begin position="243"/>
        <end position="264"/>
    </location>
</feature>
<feature type="topological domain" description="Extracellular" evidence="1">
    <location>
        <begin position="265"/>
        <end position="285"/>
    </location>
</feature>
<feature type="transmembrane region" description="Helical; Name=7" evidence="1">
    <location>
        <begin position="286"/>
        <end position="308"/>
    </location>
</feature>
<feature type="topological domain" description="Cytoplasmic" evidence="1">
    <location>
        <begin position="309"/>
        <end position="350"/>
    </location>
</feature>
<feature type="glycosylation site" description="N-linked (GlcNAc...) asparagine" evidence="1">
    <location>
        <position position="3"/>
    </location>
</feature>
<feature type="glycosylation site" description="N-linked (GlcNAc...) asparagine" evidence="1">
    <location>
        <position position="16"/>
    </location>
</feature>
<feature type="disulfide bond" evidence="2">
    <location>
        <begin position="110"/>
        <end position="187"/>
    </location>
</feature>
<feature type="sequence variant" id="VAR_021061" description="In dbSNP:rs16858811." evidence="4 5 8">
    <original>M</original>
    <variation>R</variation>
    <location>
        <position position="31"/>
    </location>
</feature>
<feature type="sequence variant" id="VAR_016236" description="In dbSNP:rs1805038.">
    <original>R</original>
    <variation>C</variation>
    <location>
        <position position="71"/>
    </location>
</feature>
<feature type="sequence variant" id="VAR_026525" description="In dbSNP:rs9282752.">
    <original>M</original>
    <variation>L</variation>
    <location>
        <position position="268"/>
    </location>
</feature>
<feature type="sequence variant" id="VAR_003479" description="In dbSNP:rs2234671." evidence="3 5 6 8">
    <original>S</original>
    <variation>T</variation>
    <location>
        <position position="276"/>
    </location>
</feature>
<feature type="sequence variant" id="VAR_016237" description="In dbSNP:rs201583693." evidence="3">
    <original>A</original>
    <variation>T</variation>
    <location>
        <position position="306"/>
    </location>
</feature>
<feature type="sequence variant" id="VAR_016238" description="In dbSNP:rs16858808." evidence="3 4 5 8">
    <original>R</original>
    <variation>C</variation>
    <location>
        <position position="335"/>
    </location>
</feature>
<feature type="sequence variant" id="VAR_021062" description="In dbSNP:rs16858806." evidence="8">
    <original>S</original>
    <variation>L</variation>
    <location>
        <position position="342"/>
    </location>
</feature>
<feature type="sequence conflict" description="In Ref. 11; AAH72397." evidence="9" ref="11">
    <original>K</original>
    <variation>N</variation>
    <location>
        <position position="154"/>
    </location>
</feature>
<feature type="helix" evidence="11">
    <location>
        <begin position="36"/>
        <end position="67"/>
    </location>
</feature>
<feature type="helix" evidence="11">
    <location>
        <begin position="73"/>
        <end position="101"/>
    </location>
</feature>
<feature type="helix" evidence="11">
    <location>
        <begin position="107"/>
        <end position="139"/>
    </location>
</feature>
<feature type="strand" evidence="11">
    <location>
        <begin position="143"/>
        <end position="146"/>
    </location>
</feature>
<feature type="turn" evidence="11">
    <location>
        <begin position="149"/>
        <end position="152"/>
    </location>
</feature>
<feature type="helix" evidence="11">
    <location>
        <begin position="153"/>
        <end position="167"/>
    </location>
</feature>
<feature type="helix" evidence="11">
    <location>
        <begin position="169"/>
        <end position="173"/>
    </location>
</feature>
<feature type="helix" evidence="11">
    <location>
        <begin position="195"/>
        <end position="202"/>
    </location>
</feature>
<feature type="helix" evidence="11">
    <location>
        <begin position="204"/>
        <end position="208"/>
    </location>
</feature>
<feature type="turn" evidence="11">
    <location>
        <begin position="209"/>
        <end position="211"/>
    </location>
</feature>
<feature type="helix" evidence="11">
    <location>
        <begin position="212"/>
        <end position="231"/>
    </location>
</feature>
<feature type="helix" evidence="11">
    <location>
        <begin position="238"/>
        <end position="269"/>
    </location>
</feature>
<feature type="strand" evidence="10">
    <location>
        <begin position="270"/>
        <end position="272"/>
    </location>
</feature>
<feature type="helix" evidence="11">
    <location>
        <begin position="277"/>
        <end position="296"/>
    </location>
</feature>
<feature type="turn" evidence="11">
    <location>
        <begin position="297"/>
        <end position="299"/>
    </location>
</feature>
<feature type="helix" evidence="11">
    <location>
        <begin position="300"/>
        <end position="305"/>
    </location>
</feature>
<feature type="turn" evidence="11">
    <location>
        <begin position="306"/>
        <end position="308"/>
    </location>
</feature>
<feature type="helix" evidence="11">
    <location>
        <begin position="310"/>
        <end position="321"/>
    </location>
</feature>
<sequence>MSNITDPQMWDFDDLNFTGMPPADEDYSPCMLETETLNKYVVIIAYALVFLLSLLGNSLVMLVILYSRVGRSVTDVYLLNLALADLLFALTLPIWAASKVNGWIFGTFLCKVVSLLKEVNFYSGILLLACISVDRYLAIVHATRTLTQKRHLVKFVCLGCWGLSMNLSLPFFLFRQAYHPNNSSPVCYEVLGNDTAKWRMVLRILPHTFGFIVPLFVMLFCYGFTLRTLFKAHMGQKHRAMRVIFAVVLIFLLCWLPYNLVLLADTLMRTQVIQESCERRNNIGRALDATEILGFLHSCLNPIIYAFIGQNFRHGFLKILAMHGLVSKEFLARHRVTSYTSSSVNVSSNL</sequence>